<organism>
    <name type="scientific">Helicobacter pylori (strain G27)</name>
    <dbReference type="NCBI Taxonomy" id="563041"/>
    <lineage>
        <taxon>Bacteria</taxon>
        <taxon>Pseudomonadati</taxon>
        <taxon>Campylobacterota</taxon>
        <taxon>Epsilonproteobacteria</taxon>
        <taxon>Campylobacterales</taxon>
        <taxon>Helicobacteraceae</taxon>
        <taxon>Helicobacter</taxon>
    </lineage>
</organism>
<gene>
    <name evidence="1" type="primary">rplE</name>
    <name type="ordered locus">HPG27_1256</name>
</gene>
<proteinExistence type="inferred from homology"/>
<keyword id="KW-1185">Reference proteome</keyword>
<keyword id="KW-0687">Ribonucleoprotein</keyword>
<keyword id="KW-0689">Ribosomal protein</keyword>
<keyword id="KW-0694">RNA-binding</keyword>
<keyword id="KW-0699">rRNA-binding</keyword>
<keyword id="KW-0820">tRNA-binding</keyword>
<protein>
    <recommendedName>
        <fullName evidence="1">Large ribosomal subunit protein uL5</fullName>
    </recommendedName>
    <alternativeName>
        <fullName evidence="2">50S ribosomal protein L5</fullName>
    </alternativeName>
</protein>
<dbReference type="EMBL" id="CP001173">
    <property type="protein sequence ID" value="ACI28004.1"/>
    <property type="molecule type" value="Genomic_DNA"/>
</dbReference>
<dbReference type="RefSeq" id="WP_000467354.1">
    <property type="nucleotide sequence ID" value="NC_011333.1"/>
</dbReference>
<dbReference type="SMR" id="B5Z8V5"/>
<dbReference type="KEGG" id="hpg:HPG27_1256"/>
<dbReference type="HOGENOM" id="CLU_061015_2_1_7"/>
<dbReference type="Proteomes" id="UP000001735">
    <property type="component" value="Chromosome"/>
</dbReference>
<dbReference type="GO" id="GO:1990904">
    <property type="term" value="C:ribonucleoprotein complex"/>
    <property type="evidence" value="ECO:0007669"/>
    <property type="project" value="UniProtKB-KW"/>
</dbReference>
<dbReference type="GO" id="GO:0005840">
    <property type="term" value="C:ribosome"/>
    <property type="evidence" value="ECO:0007669"/>
    <property type="project" value="UniProtKB-KW"/>
</dbReference>
<dbReference type="GO" id="GO:0019843">
    <property type="term" value="F:rRNA binding"/>
    <property type="evidence" value="ECO:0007669"/>
    <property type="project" value="UniProtKB-UniRule"/>
</dbReference>
<dbReference type="GO" id="GO:0003735">
    <property type="term" value="F:structural constituent of ribosome"/>
    <property type="evidence" value="ECO:0007669"/>
    <property type="project" value="InterPro"/>
</dbReference>
<dbReference type="GO" id="GO:0000049">
    <property type="term" value="F:tRNA binding"/>
    <property type="evidence" value="ECO:0007669"/>
    <property type="project" value="UniProtKB-UniRule"/>
</dbReference>
<dbReference type="GO" id="GO:0006412">
    <property type="term" value="P:translation"/>
    <property type="evidence" value="ECO:0007669"/>
    <property type="project" value="UniProtKB-UniRule"/>
</dbReference>
<dbReference type="FunFam" id="3.30.1440.10:FF:000001">
    <property type="entry name" value="50S ribosomal protein L5"/>
    <property type="match status" value="1"/>
</dbReference>
<dbReference type="Gene3D" id="3.30.1440.10">
    <property type="match status" value="1"/>
</dbReference>
<dbReference type="HAMAP" id="MF_01333_B">
    <property type="entry name" value="Ribosomal_uL5_B"/>
    <property type="match status" value="1"/>
</dbReference>
<dbReference type="InterPro" id="IPR002132">
    <property type="entry name" value="Ribosomal_uL5"/>
</dbReference>
<dbReference type="InterPro" id="IPR020930">
    <property type="entry name" value="Ribosomal_uL5_bac-type"/>
</dbReference>
<dbReference type="InterPro" id="IPR031309">
    <property type="entry name" value="Ribosomal_uL5_C"/>
</dbReference>
<dbReference type="InterPro" id="IPR020929">
    <property type="entry name" value="Ribosomal_uL5_CS"/>
</dbReference>
<dbReference type="InterPro" id="IPR022803">
    <property type="entry name" value="Ribosomal_uL5_dom_sf"/>
</dbReference>
<dbReference type="InterPro" id="IPR031310">
    <property type="entry name" value="Ribosomal_uL5_N"/>
</dbReference>
<dbReference type="NCBIfam" id="NF000585">
    <property type="entry name" value="PRK00010.1"/>
    <property type="match status" value="1"/>
</dbReference>
<dbReference type="PANTHER" id="PTHR11994">
    <property type="entry name" value="60S RIBOSOMAL PROTEIN L11-RELATED"/>
    <property type="match status" value="1"/>
</dbReference>
<dbReference type="Pfam" id="PF00281">
    <property type="entry name" value="Ribosomal_L5"/>
    <property type="match status" value="1"/>
</dbReference>
<dbReference type="Pfam" id="PF00673">
    <property type="entry name" value="Ribosomal_L5_C"/>
    <property type="match status" value="1"/>
</dbReference>
<dbReference type="PIRSF" id="PIRSF002161">
    <property type="entry name" value="Ribosomal_L5"/>
    <property type="match status" value="1"/>
</dbReference>
<dbReference type="SUPFAM" id="SSF55282">
    <property type="entry name" value="RL5-like"/>
    <property type="match status" value="1"/>
</dbReference>
<dbReference type="PROSITE" id="PS00358">
    <property type="entry name" value="RIBOSOMAL_L5"/>
    <property type="match status" value="1"/>
</dbReference>
<feature type="chain" id="PRO_1000142410" description="Large ribosomal subunit protein uL5">
    <location>
        <begin position="1"/>
        <end position="181"/>
    </location>
</feature>
<comment type="function">
    <text evidence="1">This is one of the proteins that bind and probably mediate the attachment of the 5S RNA into the large ribosomal subunit, where it forms part of the central protuberance. In the 70S ribosome it contacts protein S13 of the 30S subunit (bridge B1b), connecting the 2 subunits; this bridge is implicated in subunit movement. Contacts the P site tRNA; the 5S rRNA and some of its associated proteins might help stabilize positioning of ribosome-bound tRNAs.</text>
</comment>
<comment type="subunit">
    <text evidence="1">Part of the 50S ribosomal subunit; part of the 5S rRNA/L5/L18/L25 subcomplex. Contacts the 5S rRNA and the P site tRNA. Forms a bridge to the 30S subunit in the 70S ribosome.</text>
</comment>
<comment type="similarity">
    <text evidence="1">Belongs to the universal ribosomal protein uL5 family.</text>
</comment>
<name>RL5_HELPG</name>
<reference key="1">
    <citation type="journal article" date="2009" name="J. Bacteriol.">
        <title>The complete genome sequence of Helicobacter pylori strain G27.</title>
        <authorList>
            <person name="Baltrus D.A."/>
            <person name="Amieva M.R."/>
            <person name="Covacci A."/>
            <person name="Lowe T.M."/>
            <person name="Merrell D.S."/>
            <person name="Ottemann K.M."/>
            <person name="Stein M."/>
            <person name="Salama N.R."/>
            <person name="Guillemin K."/>
        </authorList>
    </citation>
    <scope>NUCLEOTIDE SEQUENCE [LARGE SCALE GENOMIC DNA]</scope>
    <source>
        <strain>G27</strain>
    </source>
</reference>
<accession>B5Z8V5</accession>
<sequence>MFGLKQFYQDEVRAKLAQELDIKNPMLLPKLEKIVISVGAGAHAKDMKIMQNIAQTISLIAGQKAVITKAKKSVAGFKIREGMAVGAKVTLRNKRMYNFLEKLIVISLPRVKDFRGISRNGFDGRGNYTFGINEQLIFPEVVYDDIMVSHGMNITMVTSTDNDKEAFKLLELLGLPFAKVR</sequence>
<evidence type="ECO:0000255" key="1">
    <source>
        <dbReference type="HAMAP-Rule" id="MF_01333"/>
    </source>
</evidence>
<evidence type="ECO:0000305" key="2"/>